<reference key="1">
    <citation type="journal article" date="2009" name="J. Mol. Biol.">
        <title>Genome sequences of Escherichia coli B strains REL606 and BL21(DE3).</title>
        <authorList>
            <person name="Jeong H."/>
            <person name="Barbe V."/>
            <person name="Lee C.H."/>
            <person name="Vallenet D."/>
            <person name="Yu D.S."/>
            <person name="Choi S.H."/>
            <person name="Couloux A."/>
            <person name="Lee S.W."/>
            <person name="Yoon S.H."/>
            <person name="Cattolico L."/>
            <person name="Hur C.G."/>
            <person name="Park H.S."/>
            <person name="Segurens B."/>
            <person name="Kim S.C."/>
            <person name="Oh T.K."/>
            <person name="Lenski R.E."/>
            <person name="Studier F.W."/>
            <person name="Daegelen P."/>
            <person name="Kim J.F."/>
        </authorList>
    </citation>
    <scope>NUCLEOTIDE SEQUENCE [LARGE SCALE GENOMIC DNA]</scope>
    <source>
        <strain>B / REL606</strain>
    </source>
</reference>
<keyword id="KW-0378">Hydrolase</keyword>
<proteinExistence type="inferred from homology"/>
<accession>C6UFC0</accession>
<organism>
    <name type="scientific">Escherichia coli (strain B / REL606)</name>
    <dbReference type="NCBI Taxonomy" id="413997"/>
    <lineage>
        <taxon>Bacteria</taxon>
        <taxon>Pseudomonadati</taxon>
        <taxon>Pseudomonadota</taxon>
        <taxon>Gammaproteobacteria</taxon>
        <taxon>Enterobacterales</taxon>
        <taxon>Enterobacteriaceae</taxon>
        <taxon>Escherichia</taxon>
    </lineage>
</organism>
<name>RUTD_ECOBR</name>
<evidence type="ECO:0000255" key="1">
    <source>
        <dbReference type="HAMAP-Rule" id="MF_00832"/>
    </source>
</evidence>
<gene>
    <name evidence="1" type="primary">rutD</name>
    <name type="ordered locus">ECB_01012</name>
</gene>
<comment type="function">
    <text evidence="1">Involved in pyrimidine catabolism. May facilitate the hydrolysis of carbamate, a reaction that can also occur spontaneously.</text>
</comment>
<comment type="catalytic activity">
    <reaction evidence="1">
        <text>carbamate + 2 H(+) = NH4(+) + CO2</text>
        <dbReference type="Rhea" id="RHEA:15649"/>
        <dbReference type="ChEBI" id="CHEBI:13941"/>
        <dbReference type="ChEBI" id="CHEBI:15378"/>
        <dbReference type="ChEBI" id="CHEBI:16526"/>
        <dbReference type="ChEBI" id="CHEBI:28938"/>
    </reaction>
</comment>
<comment type="similarity">
    <text evidence="1">Belongs to the AB hydrolase superfamily. Hydrolase RutD family.</text>
</comment>
<feature type="chain" id="PRO_0000402941" description="Putative carbamate hydrolase RutD">
    <location>
        <begin position="1"/>
        <end position="266"/>
    </location>
</feature>
<protein>
    <recommendedName>
        <fullName evidence="1">Putative carbamate hydrolase RutD</fullName>
        <ecNumber evidence="1">3.5.1.-</ecNumber>
    </recommendedName>
    <alternativeName>
        <fullName evidence="1">Aminohydrolase</fullName>
    </alternativeName>
</protein>
<dbReference type="EC" id="3.5.1.-" evidence="1"/>
<dbReference type="EMBL" id="CP000819">
    <property type="protein sequence ID" value="ACT38694.1"/>
    <property type="molecule type" value="Genomic_DNA"/>
</dbReference>
<dbReference type="RefSeq" id="WP_000777653.1">
    <property type="nucleotide sequence ID" value="NC_012967.1"/>
</dbReference>
<dbReference type="SMR" id="C6UFC0"/>
<dbReference type="ESTHER" id="ecoli-rutD">
    <property type="family name" value="RutD"/>
</dbReference>
<dbReference type="KEGG" id="ebr:ECB_01012"/>
<dbReference type="HOGENOM" id="CLU_020336_50_1_6"/>
<dbReference type="BioCyc" id="ECOL413997:GCQD-1212-MONOMER"/>
<dbReference type="GO" id="GO:0016811">
    <property type="term" value="F:hydrolase activity, acting on carbon-nitrogen (but not peptide) bonds, in linear amides"/>
    <property type="evidence" value="ECO:0007669"/>
    <property type="project" value="InterPro"/>
</dbReference>
<dbReference type="GO" id="GO:0019740">
    <property type="term" value="P:nitrogen utilization"/>
    <property type="evidence" value="ECO:0007669"/>
    <property type="project" value="UniProtKB-UniRule"/>
</dbReference>
<dbReference type="GO" id="GO:0006212">
    <property type="term" value="P:uracil catabolic process"/>
    <property type="evidence" value="ECO:0007669"/>
    <property type="project" value="UniProtKB-UniRule"/>
</dbReference>
<dbReference type="FunFam" id="3.40.50.1820:FF:000052">
    <property type="entry name" value="Putative aminoacrylate hydrolase RutD"/>
    <property type="match status" value="1"/>
</dbReference>
<dbReference type="Gene3D" id="3.40.50.1820">
    <property type="entry name" value="alpha/beta hydrolase"/>
    <property type="match status" value="1"/>
</dbReference>
<dbReference type="HAMAP" id="MF_00832">
    <property type="entry name" value="RutD"/>
    <property type="match status" value="1"/>
</dbReference>
<dbReference type="InterPro" id="IPR000073">
    <property type="entry name" value="AB_hydrolase_1"/>
</dbReference>
<dbReference type="InterPro" id="IPR029058">
    <property type="entry name" value="AB_hydrolase_fold"/>
</dbReference>
<dbReference type="InterPro" id="IPR050266">
    <property type="entry name" value="AB_hydrolase_sf"/>
</dbReference>
<dbReference type="InterPro" id="IPR019913">
    <property type="entry name" value="Pyrimidine_utilisation_RutD"/>
</dbReference>
<dbReference type="NCBIfam" id="TIGR03611">
    <property type="entry name" value="RutD"/>
    <property type="match status" value="1"/>
</dbReference>
<dbReference type="PANTHER" id="PTHR43798">
    <property type="entry name" value="MONOACYLGLYCEROL LIPASE"/>
    <property type="match status" value="1"/>
</dbReference>
<dbReference type="Pfam" id="PF00561">
    <property type="entry name" value="Abhydrolase_1"/>
    <property type="match status" value="1"/>
</dbReference>
<dbReference type="PRINTS" id="PR00111">
    <property type="entry name" value="ABHYDROLASE"/>
</dbReference>
<dbReference type="SUPFAM" id="SSF53474">
    <property type="entry name" value="alpha/beta-Hydrolases"/>
    <property type="match status" value="1"/>
</dbReference>
<sequence length="266" mass="28898">MKLSLSPPPYADAPVVVLISGLGGSGSYWLPQLAVLEQEYQVVCYDQRGTGNNPDTLAEDYSIAQMAAELHQALVAAGIEHYAVVGHALGALVGMQLALDYPASVTVLISVNGWLRINAHTRRCFQVRERLLYSGGAQAWVEAQPLFLYPADWMAARAPRLEAEDALALAHFQGKNNLLRRLNALKRADFSHHADRIRCPVQIICASDDLLVPTACSSELHAALPDSQKMVMPYGGHACNVTDPETFNALLLNGLASLLHHREAAL</sequence>